<evidence type="ECO:0000255" key="1">
    <source>
        <dbReference type="HAMAP-Rule" id="MF_04074"/>
    </source>
</evidence>
<evidence type="ECO:0007829" key="2">
    <source>
        <dbReference type="PDB" id="5FCG"/>
    </source>
</evidence>
<sequence>MAARMCCQLDPARDVLCLRPVGAESRGRPLPGPLGALPPSSASAVPADHGSHLSLRGLPVCSFSSAGPCALRFTSARRMETTVNAPWSLPTVLHKRTIGLSGRSMTWIEEYIKDCVFKDWEELGEEIRLKVFVLGGCRHKLVCSPAPCNFFTSA</sequence>
<dbReference type="EMBL" id="AF223965">
    <property type="protein sequence ID" value="AAG49731.1"/>
    <property type="molecule type" value="Genomic_DNA"/>
</dbReference>
<dbReference type="PDB" id="5FCG">
    <property type="method" value="X-ray"/>
    <property type="resolution" value="2.10 A"/>
    <property type="chains" value="C=110-135"/>
</dbReference>
<dbReference type="PDBsum" id="5FCG"/>
<dbReference type="SMR" id="Q99HR6"/>
<dbReference type="EvolutionaryTrace" id="Q99HR6"/>
<dbReference type="Proteomes" id="UP000008031">
    <property type="component" value="Segment"/>
</dbReference>
<dbReference type="GO" id="GO:0033650">
    <property type="term" value="C:host cell mitochondrion"/>
    <property type="evidence" value="ECO:0007669"/>
    <property type="project" value="UniProtKB-SubCell"/>
</dbReference>
<dbReference type="GO" id="GO:0042025">
    <property type="term" value="C:host cell nucleus"/>
    <property type="evidence" value="ECO:0007669"/>
    <property type="project" value="UniProtKB-SubCell"/>
</dbReference>
<dbReference type="GO" id="GO:0006351">
    <property type="term" value="P:DNA-templated transcription"/>
    <property type="evidence" value="ECO:0007669"/>
    <property type="project" value="UniProtKB-UniRule"/>
</dbReference>
<dbReference type="GO" id="GO:0085033">
    <property type="term" value="P:symbiont-mediated activation of host NF-kappaB cascade"/>
    <property type="evidence" value="ECO:0007669"/>
    <property type="project" value="UniProtKB-UniRule"/>
</dbReference>
<dbReference type="GO" id="GO:0039592">
    <property type="term" value="P:symbiont-mediated arrest of host cell cycle during G2/M transition"/>
    <property type="evidence" value="ECO:0007669"/>
    <property type="project" value="UniProtKB-UniRule"/>
</dbReference>
<dbReference type="GO" id="GO:0019079">
    <property type="term" value="P:viral genome replication"/>
    <property type="evidence" value="ECO:0007669"/>
    <property type="project" value="UniProtKB-UniRule"/>
</dbReference>
<dbReference type="HAMAP" id="MF_04074">
    <property type="entry name" value="HBV_X"/>
    <property type="match status" value="1"/>
</dbReference>
<dbReference type="InterPro" id="IPR000236">
    <property type="entry name" value="Transactivation_prot_X"/>
</dbReference>
<dbReference type="Pfam" id="PF00739">
    <property type="entry name" value="X"/>
    <property type="match status" value="1"/>
</dbReference>
<gene>
    <name evidence="1" type="primary">X</name>
</gene>
<feature type="chain" id="PRO_0000319919" description="Protein X">
    <location>
        <begin position="1"/>
        <end position="154"/>
    </location>
</feature>
<feature type="region of interest" description="Mitochondrial targeting sequence" evidence="1">
    <location>
        <begin position="68"/>
        <end position="117"/>
    </location>
</feature>
<feature type="helix" evidence="2">
    <location>
        <begin position="114"/>
        <end position="129"/>
    </location>
</feature>
<reference key="1">
    <citation type="submission" date="2000-01" db="EMBL/GenBank/DDBJ databases">
        <title>Phylogenetic analysis of Hepatitis B virus strains with precore C-1858 variant.</title>
        <authorList>
            <person name="Alestig E."/>
            <person name="Hannoun C."/>
            <person name="Horal P."/>
            <person name="Lindh M."/>
        </authorList>
    </citation>
    <scope>NUCLEOTIDE SEQUENCE [GENOMIC DNA]</scope>
</reference>
<reference key="2">
    <citation type="journal article" date="2004" name="J. Virol.">
        <title>The enigmatic X gene of hepatitis B virus.</title>
        <authorList>
            <person name="Bouchard M.J."/>
            <person name="Schneider R.J."/>
        </authorList>
    </citation>
    <scope>REVIEW</scope>
</reference>
<reference key="3">
    <citation type="journal article" date="2006" name="Cancer Sci.">
        <title>Molecular functions and biological roles of hepatitis B virus x protein.</title>
        <authorList>
            <person name="Tang H."/>
            <person name="Oishi N."/>
            <person name="Kaneko S."/>
            <person name="Murakami S."/>
        </authorList>
    </citation>
    <scope>REVIEW</scope>
</reference>
<name>X_HBVF4</name>
<accession>Q99HR6</accession>
<keyword id="KW-0002">3D-structure</keyword>
<keyword id="KW-1074">Activation of host NF-kappa-B by virus</keyword>
<keyword id="KW-0010">Activator</keyword>
<keyword id="KW-0053">Apoptosis</keyword>
<keyword id="KW-1035">Host cytoplasm</keyword>
<keyword id="KW-1079">Host G2/M cell cycle arrest by virus</keyword>
<keyword id="KW-1045">Host mitochondrion</keyword>
<keyword id="KW-1048">Host nucleus</keyword>
<keyword id="KW-0945">Host-virus interaction</keyword>
<keyword id="KW-1121">Modulation of host cell cycle by virus</keyword>
<keyword id="KW-0804">Transcription</keyword>
<keyword id="KW-0805">Transcription regulation</keyword>
<protein>
    <recommendedName>
        <fullName evidence="1">Protein X</fullName>
    </recommendedName>
    <alternativeName>
        <fullName evidence="1">HBx</fullName>
    </alternativeName>
    <alternativeName>
        <fullName evidence="1">Peptide X</fullName>
    </alternativeName>
    <alternativeName>
        <fullName evidence="1">pX</fullName>
    </alternativeName>
</protein>
<comment type="function">
    <text evidence="1">Multifunctional protein that plays a role in silencing host antiviral defenses and promoting viral transcription. Does not seem to be essential for HBV infection. May be directly involved in development of cirrhosis and liver cancer (hepatocellular carcinoma). Most of cytosolic activities involve modulation of cytosolic calcium. The effect on apoptosis is controversial depending on the cell types in which the studies have been conducted. May induce apoptosis by localizing in mitochondria and causing loss of mitochondrial membrane potential. May also modulate apoptosis by binding host CFLAR, a key regulator of the death-inducing signaling complex (DISC). Promotes viral transcription by using the host E3 ubiquitin ligase DDB1 to target the SMC5-SMC6 complex to proteasomal degradation. This host complex would otherwise bind to viral episomal DNA, and prevents its transcription. Moderately stimulates transcription of many different viral and cellular transcription elements. Promoters and enhancers stimulated by HBx contain DNA binding sites for NF-kappa-B, AP-1, AP-2, c-EBP, ATF/CREB, or the calcium-activated factor NF-AT.</text>
</comment>
<comment type="subunit">
    <text evidence="1">May form homodimer. May interact with host CEBPA, CFLAR, CREB1, DDB1, E4F1, HBXIP, HSPD1/HSP60, NFKBIA, POLR2E and SMAD4. Interacts with host SMC5-SMC6 complex and induces its degradation. Interacts with host TRPC4AP; leading to prevent ubiquitination of TRPC4AP. Interacts with host PLSCR1; this interaction promotes ubiquitination and degradation of HBx and impairs HBx-mediated cell proliferation.</text>
</comment>
<comment type="subcellular location">
    <subcellularLocation>
        <location evidence="1">Host cytoplasm</location>
    </subcellularLocation>
    <subcellularLocation>
        <location evidence="1">Host nucleus</location>
    </subcellularLocation>
    <subcellularLocation>
        <location evidence="1">Host mitochondrion</location>
    </subcellularLocation>
    <text evidence="1">Mainly cytoplasmic as only a fraction is detected in the nucleus. In cytoplasm, a minor fraction associates with mitochondria or proteasomes.</text>
</comment>
<comment type="PTM">
    <text evidence="1">A fraction may be phosphorylated in insect cells and HepG2 cells, a human hepatoblastoma cell line. Phosphorylated in vitro by host protein kinase C or mitogen-activated protein kinase. N-acetylated in insect cells.</text>
</comment>
<comment type="similarity">
    <text evidence="1">Belongs to the orthohepadnavirus protein X family.</text>
</comment>
<comment type="caution">
    <text>Transcriptional activities should be taken with a grain of salt. As of 2007, all studies demonstrating in vivo interaction between protein X and transcriptional components were performed with significant overexpression of both proteins and in the absence of viral infection.</text>
</comment>
<organismHost>
    <name type="scientific">Homo sapiens</name>
    <name type="common">Human</name>
    <dbReference type="NCBI Taxonomy" id="9606"/>
</organismHost>
<organismHost>
    <name type="scientific">Pan troglodytes</name>
    <name type="common">Chimpanzee</name>
    <dbReference type="NCBI Taxonomy" id="9598"/>
</organismHost>
<organism>
    <name type="scientific">Hepatitis B virus genotype F2 (isolate Argentina/sa16/2000)</name>
    <name type="common">HBV-F</name>
    <dbReference type="NCBI Taxonomy" id="489501"/>
    <lineage>
        <taxon>Viruses</taxon>
        <taxon>Riboviria</taxon>
        <taxon>Pararnavirae</taxon>
        <taxon>Artverviricota</taxon>
        <taxon>Revtraviricetes</taxon>
        <taxon>Blubervirales</taxon>
        <taxon>Hepadnaviridae</taxon>
        <taxon>Orthohepadnavirus</taxon>
        <taxon>Hepatitis B virus</taxon>
        <taxon>hepatitis B virus genotype F</taxon>
    </lineage>
</organism>
<proteinExistence type="evidence at protein level"/>